<feature type="chain" id="PRO_0000232791" description="Protein PsbN">
    <location>
        <begin position="1"/>
        <end position="43"/>
    </location>
</feature>
<feature type="transmembrane region" description="Helical" evidence="1">
    <location>
        <begin position="7"/>
        <end position="27"/>
    </location>
</feature>
<comment type="function">
    <text evidence="1">May play a role in photosystem I and II biogenesis.</text>
</comment>
<comment type="subcellular location">
    <subcellularLocation>
        <location evidence="1">Cellular thylakoid membrane</location>
        <topology evidence="1">Single-pass membrane protein</topology>
    </subcellularLocation>
</comment>
<comment type="similarity">
    <text evidence="1">Belongs to the PsbN family.</text>
</comment>
<comment type="caution">
    <text evidence="1">Originally thought to be a component of PSII; based on experiments in Synechocystis, N.tabacum and barley, and its absence from PSII in T.elongatus and T.vulcanus, this is probably not true.</text>
</comment>
<protein>
    <recommendedName>
        <fullName evidence="1">Protein PsbN</fullName>
    </recommendedName>
</protein>
<evidence type="ECO:0000255" key="1">
    <source>
        <dbReference type="HAMAP-Rule" id="MF_00293"/>
    </source>
</evidence>
<keyword id="KW-0472">Membrane</keyword>
<keyword id="KW-0793">Thylakoid</keyword>
<keyword id="KW-0812">Transmembrane</keyword>
<keyword id="KW-1133">Transmembrane helix</keyword>
<proteinExistence type="inferred from homology"/>
<name>PSBN_SYNJA</name>
<sequence>MESTLSLVVAIAAITICITAFAIYTAFGPPSKNLQDPYEMHED</sequence>
<dbReference type="EMBL" id="CP000239">
    <property type="protein sequence ID" value="ABC99502.1"/>
    <property type="molecule type" value="Genomic_DNA"/>
</dbReference>
<dbReference type="RefSeq" id="WP_011430180.1">
    <property type="nucleotide sequence ID" value="NC_007775.1"/>
</dbReference>
<dbReference type="SMR" id="Q2JUV5"/>
<dbReference type="STRING" id="321327.CYA_1325"/>
<dbReference type="KEGG" id="cya:CYA_1325"/>
<dbReference type="eggNOG" id="ENOG50339MH">
    <property type="taxonomic scope" value="Bacteria"/>
</dbReference>
<dbReference type="HOGENOM" id="CLU_205504_1_0_3"/>
<dbReference type="Proteomes" id="UP000008818">
    <property type="component" value="Chromosome"/>
</dbReference>
<dbReference type="GO" id="GO:0031676">
    <property type="term" value="C:plasma membrane-derived thylakoid membrane"/>
    <property type="evidence" value="ECO:0007669"/>
    <property type="project" value="UniProtKB-SubCell"/>
</dbReference>
<dbReference type="GO" id="GO:0015979">
    <property type="term" value="P:photosynthesis"/>
    <property type="evidence" value="ECO:0007669"/>
    <property type="project" value="InterPro"/>
</dbReference>
<dbReference type="HAMAP" id="MF_00293">
    <property type="entry name" value="PSII_PsbN"/>
    <property type="match status" value="1"/>
</dbReference>
<dbReference type="InterPro" id="IPR003398">
    <property type="entry name" value="PSII_PsbN"/>
</dbReference>
<dbReference type="NCBIfam" id="NF009650">
    <property type="entry name" value="PRK13183.1"/>
    <property type="match status" value="1"/>
</dbReference>
<dbReference type="PANTHER" id="PTHR35326">
    <property type="entry name" value="PROTEIN PSBN"/>
    <property type="match status" value="1"/>
</dbReference>
<dbReference type="PANTHER" id="PTHR35326:SF3">
    <property type="entry name" value="PROTEIN PSBN"/>
    <property type="match status" value="1"/>
</dbReference>
<dbReference type="Pfam" id="PF02468">
    <property type="entry name" value="PsbN"/>
    <property type="match status" value="1"/>
</dbReference>
<organism>
    <name type="scientific">Synechococcus sp. (strain JA-3-3Ab)</name>
    <name type="common">Cyanobacteria bacterium Yellowstone A-Prime</name>
    <dbReference type="NCBI Taxonomy" id="321327"/>
    <lineage>
        <taxon>Bacteria</taxon>
        <taxon>Bacillati</taxon>
        <taxon>Cyanobacteriota</taxon>
        <taxon>Cyanophyceae</taxon>
        <taxon>Synechococcales</taxon>
        <taxon>Synechococcaceae</taxon>
        <taxon>Synechococcus</taxon>
    </lineage>
</organism>
<accession>Q2JUV5</accession>
<gene>
    <name evidence="1" type="primary">psbN</name>
    <name type="ordered locus">CYA_1325</name>
</gene>
<reference key="1">
    <citation type="journal article" date="2007" name="ISME J.">
        <title>Population level functional diversity in a microbial community revealed by comparative genomic and metagenomic analyses.</title>
        <authorList>
            <person name="Bhaya D."/>
            <person name="Grossman A.R."/>
            <person name="Steunou A.-S."/>
            <person name="Khuri N."/>
            <person name="Cohan F.M."/>
            <person name="Hamamura N."/>
            <person name="Melendrez M.C."/>
            <person name="Bateson M.M."/>
            <person name="Ward D.M."/>
            <person name="Heidelberg J.F."/>
        </authorList>
    </citation>
    <scope>NUCLEOTIDE SEQUENCE [LARGE SCALE GENOMIC DNA]</scope>
    <source>
        <strain>JA-3-3Ab</strain>
    </source>
</reference>